<keyword id="KW-0008">Acetylcholine receptor inhibiting toxin</keyword>
<keyword id="KW-0903">Direct protein sequencing</keyword>
<keyword id="KW-1015">Disulfide bond</keyword>
<keyword id="KW-0872">Ion channel impairing toxin</keyword>
<keyword id="KW-0528">Neurotoxin</keyword>
<keyword id="KW-0629">Postsynaptic neurotoxin</keyword>
<keyword id="KW-0964">Secreted</keyword>
<keyword id="KW-0732">Signal</keyword>
<keyword id="KW-0800">Toxin</keyword>
<proteinExistence type="evidence at protein level"/>
<protein>
    <recommendedName>
        <fullName>Long neurotoxin LNTX-1</fullName>
    </recommendedName>
</protein>
<accession>A6MFK4</accession>
<sequence>MKTLLLTLVVVTIVCLDFGYARTCLKTPEVKSEPCPPGQEVCYTKAWCDRMCSFRGKVIELGCAATCPRQEPGKEITCCSTDDCNTHP</sequence>
<organism>
    <name type="scientific">Demansia vestigiata</name>
    <name type="common">Lesser black whip snake</name>
    <name type="synonym">Demansia atra</name>
    <dbReference type="NCBI Taxonomy" id="412038"/>
    <lineage>
        <taxon>Eukaryota</taxon>
        <taxon>Metazoa</taxon>
        <taxon>Chordata</taxon>
        <taxon>Craniata</taxon>
        <taxon>Vertebrata</taxon>
        <taxon>Euteleostomi</taxon>
        <taxon>Lepidosauria</taxon>
        <taxon>Squamata</taxon>
        <taxon>Bifurcata</taxon>
        <taxon>Unidentata</taxon>
        <taxon>Episquamata</taxon>
        <taxon>Toxicofera</taxon>
        <taxon>Serpentes</taxon>
        <taxon>Colubroidea</taxon>
        <taxon>Elapidae</taxon>
        <taxon>Notechinae</taxon>
        <taxon>Demansia</taxon>
    </lineage>
</organism>
<dbReference type="EMBL" id="DQ917515">
    <property type="protein sequence ID" value="ABK63544.1"/>
    <property type="molecule type" value="mRNA"/>
</dbReference>
<dbReference type="SMR" id="A6MFK4"/>
<dbReference type="GO" id="GO:0005576">
    <property type="term" value="C:extracellular region"/>
    <property type="evidence" value="ECO:0007669"/>
    <property type="project" value="UniProtKB-SubCell"/>
</dbReference>
<dbReference type="GO" id="GO:0030550">
    <property type="term" value="F:acetylcholine receptor inhibitor activity"/>
    <property type="evidence" value="ECO:0007669"/>
    <property type="project" value="UniProtKB-KW"/>
</dbReference>
<dbReference type="GO" id="GO:0099106">
    <property type="term" value="F:ion channel regulator activity"/>
    <property type="evidence" value="ECO:0007669"/>
    <property type="project" value="UniProtKB-KW"/>
</dbReference>
<dbReference type="GO" id="GO:0090729">
    <property type="term" value="F:toxin activity"/>
    <property type="evidence" value="ECO:0007669"/>
    <property type="project" value="UniProtKB-KW"/>
</dbReference>
<dbReference type="CDD" id="cd00206">
    <property type="entry name" value="TFP_snake_toxin"/>
    <property type="match status" value="1"/>
</dbReference>
<dbReference type="Gene3D" id="2.10.60.10">
    <property type="entry name" value="CD59"/>
    <property type="match status" value="1"/>
</dbReference>
<dbReference type="InterPro" id="IPR003571">
    <property type="entry name" value="Snake_3FTx"/>
</dbReference>
<dbReference type="InterPro" id="IPR045860">
    <property type="entry name" value="Snake_toxin-like_sf"/>
</dbReference>
<dbReference type="InterPro" id="IPR018354">
    <property type="entry name" value="Snake_toxin_con_site"/>
</dbReference>
<dbReference type="InterPro" id="IPR054131">
    <property type="entry name" value="Toxin_cobra-type"/>
</dbReference>
<dbReference type="Pfam" id="PF21947">
    <property type="entry name" value="Toxin_cobra-type"/>
    <property type="match status" value="1"/>
</dbReference>
<dbReference type="SUPFAM" id="SSF57302">
    <property type="entry name" value="Snake toxin-like"/>
    <property type="match status" value="1"/>
</dbReference>
<dbReference type="PROSITE" id="PS00272">
    <property type="entry name" value="SNAKE_TOXIN"/>
    <property type="match status" value="1"/>
</dbReference>
<name>3L21_DEMVE</name>
<comment type="function">
    <text evidence="2">Binds with high affinity to muscular (alpha-1/CHRNA1) and neuronal (alpha-7/CHRNA7) nicotinic acetylcholine receptor (nAChR) and inhibits acetylcholine from binding to the receptor, thereby impairing neuromuscular and neuronal transmission.</text>
</comment>
<comment type="subcellular location">
    <subcellularLocation>
        <location evidence="4">Secreted</location>
    </subcellularLocation>
</comment>
<comment type="tissue specificity">
    <text evidence="5">Expressed by the venom gland.</text>
</comment>
<comment type="similarity">
    <text evidence="5">Belongs to the three-finger toxin family. Long-chain subfamily. Type II alpha-neurotoxin sub-subfamily.</text>
</comment>
<feature type="signal peptide" evidence="3">
    <location>
        <begin position="1"/>
        <end position="21"/>
    </location>
</feature>
<feature type="chain" id="PRO_5000254108" description="Long neurotoxin LNTX-1">
    <location>
        <begin position="22"/>
        <end position="88"/>
    </location>
</feature>
<feature type="disulfide bond" evidence="1">
    <location>
        <begin position="24"/>
        <end position="42"/>
    </location>
</feature>
<feature type="disulfide bond" evidence="1">
    <location>
        <begin position="35"/>
        <end position="63"/>
    </location>
</feature>
<feature type="disulfide bond" evidence="1">
    <location>
        <begin position="48"/>
        <end position="52"/>
    </location>
</feature>
<feature type="disulfide bond" evidence="1">
    <location>
        <begin position="67"/>
        <end position="78"/>
    </location>
</feature>
<feature type="disulfide bond" evidence="1">
    <location>
        <begin position="79"/>
        <end position="84"/>
    </location>
</feature>
<evidence type="ECO:0000250" key="1"/>
<evidence type="ECO:0000250" key="2">
    <source>
        <dbReference type="UniProtKB" id="P60615"/>
    </source>
</evidence>
<evidence type="ECO:0000255" key="3"/>
<evidence type="ECO:0000269" key="4">
    <source>
    </source>
</evidence>
<evidence type="ECO:0000305" key="5"/>
<reference key="1">
    <citation type="journal article" date="2007" name="J. Proteome Res.">
        <title>Diversity of toxic components from the venom of the evolutionarily distinct black whip snake, Demansia vestigiata.</title>
        <authorList>
            <person name="St Pierre L."/>
            <person name="Birrell G.W."/>
            <person name="Earl S.T.H."/>
            <person name="Wallis T.P."/>
            <person name="Gorman J.J."/>
            <person name="de Jersey J."/>
            <person name="Masci P.P."/>
            <person name="Lavin M.F."/>
        </authorList>
    </citation>
    <scope>NUCLEOTIDE SEQUENCE [LARGE SCALE MRNA]</scope>
    <scope>PROTEIN SEQUENCE OF 34-45</scope>
    <scope>IDENTIFICATION BY MASS SPECTROMETRY</scope>
    <scope>SUBCELLULAR LOCATION</scope>
    <source>
        <tissue>Venom gland</tissue>
    </source>
</reference>